<feature type="chain" id="PRO_0000296536" description="Large ribosomal subunit protein bL32">
    <location>
        <begin position="1"/>
        <end position="60"/>
    </location>
</feature>
<feature type="region of interest" description="Disordered" evidence="2">
    <location>
        <begin position="1"/>
        <end position="60"/>
    </location>
</feature>
<feature type="compositionally biased region" description="Basic and acidic residues" evidence="2">
    <location>
        <begin position="11"/>
        <end position="22"/>
    </location>
</feature>
<accession>A4VMS4</accession>
<reference key="1">
    <citation type="journal article" date="2008" name="Proc. Natl. Acad. Sci. U.S.A.">
        <title>Nitrogen fixation island and rhizosphere competence traits in the genome of root-associated Pseudomonas stutzeri A1501.</title>
        <authorList>
            <person name="Yan Y."/>
            <person name="Yang J."/>
            <person name="Dou Y."/>
            <person name="Chen M."/>
            <person name="Ping S."/>
            <person name="Peng J."/>
            <person name="Lu W."/>
            <person name="Zhang W."/>
            <person name="Yao Z."/>
            <person name="Li H."/>
            <person name="Liu W."/>
            <person name="He S."/>
            <person name="Geng L."/>
            <person name="Zhang X."/>
            <person name="Yang F."/>
            <person name="Yu H."/>
            <person name="Zhan Y."/>
            <person name="Li D."/>
            <person name="Lin Z."/>
            <person name="Wang Y."/>
            <person name="Elmerich C."/>
            <person name="Lin M."/>
            <person name="Jin Q."/>
        </authorList>
    </citation>
    <scope>NUCLEOTIDE SEQUENCE [LARGE SCALE GENOMIC DNA]</scope>
    <source>
        <strain>A1501</strain>
    </source>
</reference>
<evidence type="ECO:0000255" key="1">
    <source>
        <dbReference type="HAMAP-Rule" id="MF_00340"/>
    </source>
</evidence>
<evidence type="ECO:0000256" key="2">
    <source>
        <dbReference type="SAM" id="MobiDB-lite"/>
    </source>
</evidence>
<evidence type="ECO:0000305" key="3"/>
<protein>
    <recommendedName>
        <fullName evidence="1">Large ribosomal subunit protein bL32</fullName>
    </recommendedName>
    <alternativeName>
        <fullName evidence="3">50S ribosomal protein L32</fullName>
    </alternativeName>
</protein>
<keyword id="KW-1185">Reference proteome</keyword>
<keyword id="KW-0687">Ribonucleoprotein</keyword>
<keyword id="KW-0689">Ribosomal protein</keyword>
<organism>
    <name type="scientific">Stutzerimonas stutzeri (strain A1501)</name>
    <name type="common">Pseudomonas stutzeri</name>
    <dbReference type="NCBI Taxonomy" id="379731"/>
    <lineage>
        <taxon>Bacteria</taxon>
        <taxon>Pseudomonadati</taxon>
        <taxon>Pseudomonadota</taxon>
        <taxon>Gammaproteobacteria</taxon>
        <taxon>Pseudomonadales</taxon>
        <taxon>Pseudomonadaceae</taxon>
        <taxon>Stutzerimonas</taxon>
    </lineage>
</organism>
<comment type="similarity">
    <text evidence="1">Belongs to the bacterial ribosomal protein bL32 family.</text>
</comment>
<name>RL32_STUS1</name>
<sequence>MAVQQNKKSRSARDMRRSHDALEPNALSVEKSTGEVHLRHHVSPDGFYRGRKVIDKGADE</sequence>
<dbReference type="EMBL" id="CP000304">
    <property type="protein sequence ID" value="ABP80275.1"/>
    <property type="molecule type" value="Genomic_DNA"/>
</dbReference>
<dbReference type="RefSeq" id="WP_003293518.1">
    <property type="nucleotide sequence ID" value="NC_009434.1"/>
</dbReference>
<dbReference type="SMR" id="A4VMS4"/>
<dbReference type="GeneID" id="75215124"/>
<dbReference type="KEGG" id="psa:PST_2625"/>
<dbReference type="eggNOG" id="COG0333">
    <property type="taxonomic scope" value="Bacteria"/>
</dbReference>
<dbReference type="HOGENOM" id="CLU_129084_2_1_6"/>
<dbReference type="Proteomes" id="UP000000233">
    <property type="component" value="Chromosome"/>
</dbReference>
<dbReference type="GO" id="GO:0015934">
    <property type="term" value="C:large ribosomal subunit"/>
    <property type="evidence" value="ECO:0007669"/>
    <property type="project" value="InterPro"/>
</dbReference>
<dbReference type="GO" id="GO:0003735">
    <property type="term" value="F:structural constituent of ribosome"/>
    <property type="evidence" value="ECO:0007669"/>
    <property type="project" value="InterPro"/>
</dbReference>
<dbReference type="GO" id="GO:0006412">
    <property type="term" value="P:translation"/>
    <property type="evidence" value="ECO:0007669"/>
    <property type="project" value="UniProtKB-UniRule"/>
</dbReference>
<dbReference type="HAMAP" id="MF_00340">
    <property type="entry name" value="Ribosomal_bL32"/>
    <property type="match status" value="1"/>
</dbReference>
<dbReference type="InterPro" id="IPR002677">
    <property type="entry name" value="Ribosomal_bL32"/>
</dbReference>
<dbReference type="InterPro" id="IPR044957">
    <property type="entry name" value="Ribosomal_bL32_bact"/>
</dbReference>
<dbReference type="InterPro" id="IPR011332">
    <property type="entry name" value="Ribosomal_zn-bd"/>
</dbReference>
<dbReference type="NCBIfam" id="TIGR01031">
    <property type="entry name" value="rpmF_bact"/>
    <property type="match status" value="1"/>
</dbReference>
<dbReference type="PANTHER" id="PTHR35534">
    <property type="entry name" value="50S RIBOSOMAL PROTEIN L32"/>
    <property type="match status" value="1"/>
</dbReference>
<dbReference type="PANTHER" id="PTHR35534:SF1">
    <property type="entry name" value="LARGE RIBOSOMAL SUBUNIT PROTEIN BL32"/>
    <property type="match status" value="1"/>
</dbReference>
<dbReference type="Pfam" id="PF01783">
    <property type="entry name" value="Ribosomal_L32p"/>
    <property type="match status" value="1"/>
</dbReference>
<dbReference type="SUPFAM" id="SSF57829">
    <property type="entry name" value="Zn-binding ribosomal proteins"/>
    <property type="match status" value="1"/>
</dbReference>
<proteinExistence type="inferred from homology"/>
<gene>
    <name evidence="1" type="primary">rpmF</name>
    <name type="ordered locus">PST_2625</name>
</gene>